<dbReference type="EMBL" id="CP000094">
    <property type="protein sequence ID" value="ABA72847.1"/>
    <property type="molecule type" value="Genomic_DNA"/>
</dbReference>
<dbReference type="RefSeq" id="WP_011332684.1">
    <property type="nucleotide sequence ID" value="NC_007492.2"/>
</dbReference>
<dbReference type="SMR" id="Q3KHA9"/>
<dbReference type="KEGG" id="pfo:Pfl01_1104"/>
<dbReference type="eggNOG" id="COG0233">
    <property type="taxonomic scope" value="Bacteria"/>
</dbReference>
<dbReference type="HOGENOM" id="CLU_073981_2_1_6"/>
<dbReference type="Proteomes" id="UP000002704">
    <property type="component" value="Chromosome"/>
</dbReference>
<dbReference type="GO" id="GO:0005829">
    <property type="term" value="C:cytosol"/>
    <property type="evidence" value="ECO:0007669"/>
    <property type="project" value="GOC"/>
</dbReference>
<dbReference type="GO" id="GO:0043023">
    <property type="term" value="F:ribosomal large subunit binding"/>
    <property type="evidence" value="ECO:0007669"/>
    <property type="project" value="TreeGrafter"/>
</dbReference>
<dbReference type="GO" id="GO:0002184">
    <property type="term" value="P:cytoplasmic translational termination"/>
    <property type="evidence" value="ECO:0007669"/>
    <property type="project" value="TreeGrafter"/>
</dbReference>
<dbReference type="CDD" id="cd00520">
    <property type="entry name" value="RRF"/>
    <property type="match status" value="1"/>
</dbReference>
<dbReference type="FunFam" id="1.10.132.20:FF:000001">
    <property type="entry name" value="Ribosome-recycling factor"/>
    <property type="match status" value="1"/>
</dbReference>
<dbReference type="FunFam" id="3.30.1360.40:FF:000001">
    <property type="entry name" value="Ribosome-recycling factor"/>
    <property type="match status" value="1"/>
</dbReference>
<dbReference type="Gene3D" id="3.30.1360.40">
    <property type="match status" value="1"/>
</dbReference>
<dbReference type="Gene3D" id="1.10.132.20">
    <property type="entry name" value="Ribosome-recycling factor"/>
    <property type="match status" value="1"/>
</dbReference>
<dbReference type="HAMAP" id="MF_00040">
    <property type="entry name" value="RRF"/>
    <property type="match status" value="1"/>
</dbReference>
<dbReference type="InterPro" id="IPR002661">
    <property type="entry name" value="Ribosome_recyc_fac"/>
</dbReference>
<dbReference type="InterPro" id="IPR023584">
    <property type="entry name" value="Ribosome_recyc_fac_dom"/>
</dbReference>
<dbReference type="InterPro" id="IPR036191">
    <property type="entry name" value="RRF_sf"/>
</dbReference>
<dbReference type="NCBIfam" id="TIGR00496">
    <property type="entry name" value="frr"/>
    <property type="match status" value="1"/>
</dbReference>
<dbReference type="PANTHER" id="PTHR20982:SF3">
    <property type="entry name" value="MITOCHONDRIAL RIBOSOME RECYCLING FACTOR PSEUDO 1"/>
    <property type="match status" value="1"/>
</dbReference>
<dbReference type="PANTHER" id="PTHR20982">
    <property type="entry name" value="RIBOSOME RECYCLING FACTOR"/>
    <property type="match status" value="1"/>
</dbReference>
<dbReference type="Pfam" id="PF01765">
    <property type="entry name" value="RRF"/>
    <property type="match status" value="1"/>
</dbReference>
<dbReference type="SUPFAM" id="SSF55194">
    <property type="entry name" value="Ribosome recycling factor, RRF"/>
    <property type="match status" value="1"/>
</dbReference>
<comment type="function">
    <text evidence="1">Responsible for the release of ribosomes from messenger RNA at the termination of protein biosynthesis. May increase the efficiency of translation by recycling ribosomes from one round of translation to another.</text>
</comment>
<comment type="subcellular location">
    <subcellularLocation>
        <location evidence="1">Cytoplasm</location>
    </subcellularLocation>
</comment>
<comment type="similarity">
    <text evidence="1">Belongs to the RRF family.</text>
</comment>
<proteinExistence type="inferred from homology"/>
<evidence type="ECO:0000255" key="1">
    <source>
        <dbReference type="HAMAP-Rule" id="MF_00040"/>
    </source>
</evidence>
<protein>
    <recommendedName>
        <fullName evidence="1">Ribosome-recycling factor</fullName>
        <shortName evidence="1">RRF</shortName>
    </recommendedName>
    <alternativeName>
        <fullName evidence="1">Ribosome-releasing factor</fullName>
    </alternativeName>
</protein>
<accession>Q3KHA9</accession>
<feature type="chain" id="PRO_1000003235" description="Ribosome-recycling factor">
    <location>
        <begin position="1"/>
        <end position="185"/>
    </location>
</feature>
<organism>
    <name type="scientific">Pseudomonas fluorescens (strain Pf0-1)</name>
    <dbReference type="NCBI Taxonomy" id="205922"/>
    <lineage>
        <taxon>Bacteria</taxon>
        <taxon>Pseudomonadati</taxon>
        <taxon>Pseudomonadota</taxon>
        <taxon>Gammaproteobacteria</taxon>
        <taxon>Pseudomonadales</taxon>
        <taxon>Pseudomonadaceae</taxon>
        <taxon>Pseudomonas</taxon>
    </lineage>
</organism>
<keyword id="KW-0963">Cytoplasm</keyword>
<keyword id="KW-0648">Protein biosynthesis</keyword>
<name>RRF_PSEPF</name>
<gene>
    <name evidence="1" type="primary">frr</name>
    <name type="ordered locus">Pfl01_1104</name>
</gene>
<reference key="1">
    <citation type="journal article" date="2009" name="Genome Biol.">
        <title>Genomic and genetic analyses of diversity and plant interactions of Pseudomonas fluorescens.</title>
        <authorList>
            <person name="Silby M.W."/>
            <person name="Cerdeno-Tarraga A.M."/>
            <person name="Vernikos G.S."/>
            <person name="Giddens S.R."/>
            <person name="Jackson R.W."/>
            <person name="Preston G.M."/>
            <person name="Zhang X.-X."/>
            <person name="Moon C.D."/>
            <person name="Gehrig S.M."/>
            <person name="Godfrey S.A.C."/>
            <person name="Knight C.G."/>
            <person name="Malone J.G."/>
            <person name="Robinson Z."/>
            <person name="Spiers A.J."/>
            <person name="Harris S."/>
            <person name="Challis G.L."/>
            <person name="Yaxley A.M."/>
            <person name="Harris D."/>
            <person name="Seeger K."/>
            <person name="Murphy L."/>
            <person name="Rutter S."/>
            <person name="Squares R."/>
            <person name="Quail M.A."/>
            <person name="Saunders E."/>
            <person name="Mavromatis K."/>
            <person name="Brettin T.S."/>
            <person name="Bentley S.D."/>
            <person name="Hothersall J."/>
            <person name="Stephens E."/>
            <person name="Thomas C.M."/>
            <person name="Parkhill J."/>
            <person name="Levy S.B."/>
            <person name="Rainey P.B."/>
            <person name="Thomson N.R."/>
        </authorList>
    </citation>
    <scope>NUCLEOTIDE SEQUENCE [LARGE SCALE GENOMIC DNA]</scope>
    <source>
        <strain>Pf0-1</strain>
    </source>
</reference>
<sequence>MINEIKKDAKERMTKSVESLAHNFGRIRTGQAHPSILEGVMVPYYGADTPIKQVANITVKDARTLQVVAFERNMLGAVDKAIGSAGLNLNPTNLGELLLISMPALTEETRRGFTKQARDVAEDARVAVRNIRRDANSSLKDLVKEKEISEDEERRAAGEIDDLTKKFVAEIDAKLAEKEKDLMAV</sequence>